<keyword id="KW-0067">ATP-binding</keyword>
<keyword id="KW-0227">DNA damage</keyword>
<keyword id="KW-0234">DNA repair</keyword>
<keyword id="KW-0238">DNA-binding</keyword>
<keyword id="KW-0547">Nucleotide-binding</keyword>
<keyword id="KW-0539">Nucleus</keyword>
<keyword id="KW-1185">Reference proteome</keyword>
<feature type="chain" id="PRO_0000115186" description="DNA mismatch repair protein spellchecker 1">
    <location>
        <begin position="1"/>
        <end position="917"/>
    </location>
</feature>
<feature type="binding site" evidence="2">
    <location>
        <begin position="667"/>
        <end position="674"/>
    </location>
    <ligand>
        <name>ATP</name>
        <dbReference type="ChEBI" id="CHEBI:30616"/>
    </ligand>
</feature>
<feature type="sequence conflict" description="In Ref. 1; AAA62406." evidence="4" ref="1">
    <original>S</original>
    <variation>P</variation>
    <location>
        <position position="817"/>
    </location>
</feature>
<accession>P43248</accession>
<accession>Q86BK6</accession>
<accession>Q9NKC4</accession>
<accession>Q9VJT0</accession>
<gene>
    <name type="primary">spel1</name>
    <name type="ORF">CG4215</name>
</gene>
<evidence type="ECO:0000250" key="1"/>
<evidence type="ECO:0000255" key="2"/>
<evidence type="ECO:0000269" key="3">
    <source>
    </source>
</evidence>
<evidence type="ECO:0000305" key="4"/>
<comment type="function">
    <text evidence="1 3">Involved in postreplication mismatch repair. Binds specifically to DNA containing mismatched nucleotides thus providing a target for the excision repair processes characteristic of postreplication mismatch repair (By similarity).</text>
</comment>
<comment type="subunit">
    <text evidence="1">Heterodimer of Msh2/Spel and Msh6.</text>
</comment>
<comment type="subcellular location">
    <subcellularLocation>
        <location evidence="4">Nucleus</location>
    </subcellularLocation>
</comment>
<comment type="similarity">
    <text evidence="4">Belongs to the DNA mismatch repair MutS family.</text>
</comment>
<comment type="sequence caution" evidence="4">
    <conflict type="erroneous gene model prediction">
        <sequence resource="EMBL-CDS" id="AAA62406"/>
    </conflict>
</comment>
<name>MSH2_DROME</name>
<sequence length="917" mass="103313">MQAKATDSRQEPTLNMDTNARRNFIKFHAKLGEKPATTVRFFDHTDRYTVHGSDDCELVAKIVYKSTAFIGALLPDDKKETLQFVSMSKGNFELAVRELLLVRNYRVEVYVKNSSDWEIEYRGSPGNLLQFEDILFSNKEVLVGNSIISLLVKLDGGGQRRVGVASVEQNDCKFQLLEFLDDDFFTELEATVVLLGPKECLLPSIEGEYSAVKTLLDRNGVMITMPKKSGDNDLLQDLNRLLRFAKGQQEDATGLKELQLQLASNALKTAIKYLDLVNDAGNLGHYEIKQLDLNRFVHLDSAAVAALNIMPKPGTHPSMPSYRWQSVLGVLDHCRTPQGHRLMGQWVKQPLRSRNILNDRHNIVQCLLESPDTMETLSLDYLKRIPDILMLTKKLMRRKANLQDLFRIYQVILRTPKILKVLHELDNSTIESVICAPFKSFLKDLTGLKQMVEQVVDFEAIERGEYLVKASFDSRLMELQQMMTELYSKMEELQFKCSQELNLDGKNQVKLESVAKLGHHFRITVKDDSVLRKNKNYRIVDVIKGGVRFTSDKLEGYADEFASCRTRYEEQQLSIVEEIIHVAVGYAAPLTLLNNELAQLDCLVSFAIAARSAPTPYVRPKMLEEGARELVLEDVRHPCLELQEHVNFIANSVDFKKEECNMFIITGPNMGGKSTYIRSVGTAVLMAHIGAFVPCSLATISMVDSILGRVGASDNIIKGLSTFMVEMIETSGIIRTATDKSLVIIDELGRGTSTYEGCGIAWSIAEHLAKETKCFTLFATHFHEITKLAETLSTVKNCHMAAVADADDFTLLYQVRSGVMEKSFGIQVARLANFPEHVVQNAQEVYNEFEDEHVDKQKKEDKALLEKIQVAIQQLSTAGNNVDINVEDLTQLVTQFTKDIEQLDSDYFKSVLATSEA</sequence>
<protein>
    <recommendedName>
        <fullName>DNA mismatch repair protein spellchecker 1</fullName>
    </recommendedName>
</protein>
<proteinExistence type="inferred from homology"/>
<dbReference type="EMBL" id="U17893">
    <property type="protein sequence ID" value="AAA62406.1"/>
    <property type="status" value="ALT_SEQ"/>
    <property type="molecule type" value="Genomic_DNA"/>
</dbReference>
<dbReference type="EMBL" id="AE014134">
    <property type="protein sequence ID" value="AAF53392.2"/>
    <property type="molecule type" value="Genomic_DNA"/>
</dbReference>
<dbReference type="RefSeq" id="NP_001014482.2">
    <property type="nucleotide sequence ID" value="NM_001014482.3"/>
</dbReference>
<dbReference type="RefSeq" id="NP_001246031.1">
    <property type="nucleotide sequence ID" value="NM_001259102.2"/>
</dbReference>
<dbReference type="RefSeq" id="NP_001285931.1">
    <property type="nucleotide sequence ID" value="NM_001299002.1"/>
</dbReference>
<dbReference type="RefSeq" id="NP_523565.2">
    <property type="nucleotide sequence ID" value="NM_078841.5"/>
</dbReference>
<dbReference type="SMR" id="P43248"/>
<dbReference type="BioGRID" id="60866">
    <property type="interactions" value="6"/>
</dbReference>
<dbReference type="DIP" id="DIP-21499N"/>
<dbReference type="FunCoup" id="P43248">
    <property type="interactions" value="2199"/>
</dbReference>
<dbReference type="IntAct" id="P43248">
    <property type="interactions" value="2"/>
</dbReference>
<dbReference type="STRING" id="7227.FBpp0301208"/>
<dbReference type="PaxDb" id="7227-FBpp0301208"/>
<dbReference type="EnsemblMetazoa" id="FBtr0080630">
    <property type="protein sequence ID" value="FBpp0080203"/>
    <property type="gene ID" value="FBgn0015546"/>
</dbReference>
<dbReference type="EnsemblMetazoa" id="FBtr0309281">
    <property type="protein sequence ID" value="FBpp0301208"/>
    <property type="gene ID" value="FBgn0015546"/>
</dbReference>
<dbReference type="EnsemblMetazoa" id="FBtr0344018">
    <property type="protein sequence ID" value="FBpp0310469"/>
    <property type="gene ID" value="FBgn0015546"/>
</dbReference>
<dbReference type="EnsemblMetazoa" id="FBtr0344019">
    <property type="protein sequence ID" value="FBpp0310470"/>
    <property type="gene ID" value="FBgn0015546"/>
</dbReference>
<dbReference type="GeneID" id="34842"/>
<dbReference type="KEGG" id="dme:Dmel_CG4215"/>
<dbReference type="UCSC" id="CG4215-RA">
    <property type="organism name" value="d. melanogaster"/>
</dbReference>
<dbReference type="AGR" id="FB:FBgn0015546"/>
<dbReference type="CTD" id="34842"/>
<dbReference type="FlyBase" id="FBgn0015546">
    <property type="gene designation" value="spel1"/>
</dbReference>
<dbReference type="VEuPathDB" id="VectorBase:FBgn0015546"/>
<dbReference type="eggNOG" id="KOG0219">
    <property type="taxonomic scope" value="Eukaryota"/>
</dbReference>
<dbReference type="GeneTree" id="ENSGT00550000074867"/>
<dbReference type="HOGENOM" id="CLU_002472_10_0_1"/>
<dbReference type="InParanoid" id="P43248"/>
<dbReference type="OMA" id="LVRFPQK"/>
<dbReference type="OrthoDB" id="295033at2759"/>
<dbReference type="PhylomeDB" id="P43248"/>
<dbReference type="Reactome" id="R-DME-5358565">
    <property type="pathway name" value="Mismatch repair (MMR) directed by MSH2:MSH6 (MutSalpha)"/>
</dbReference>
<dbReference type="BioGRID-ORCS" id="34842">
    <property type="hits" value="0 hits in 1 CRISPR screen"/>
</dbReference>
<dbReference type="GenomeRNAi" id="34842"/>
<dbReference type="PRO" id="PR:P43248"/>
<dbReference type="Proteomes" id="UP000000803">
    <property type="component" value="Chromosome 2L"/>
</dbReference>
<dbReference type="Bgee" id="FBgn0015546">
    <property type="expression patterns" value="Expressed in cleaving embryo and 61 other cell types or tissues"/>
</dbReference>
<dbReference type="ExpressionAtlas" id="P43248">
    <property type="expression patterns" value="baseline and differential"/>
</dbReference>
<dbReference type="GO" id="GO:0032301">
    <property type="term" value="C:MutSalpha complex"/>
    <property type="evidence" value="ECO:0000318"/>
    <property type="project" value="GO_Central"/>
</dbReference>
<dbReference type="GO" id="GO:0005634">
    <property type="term" value="C:nucleus"/>
    <property type="evidence" value="ECO:0000318"/>
    <property type="project" value="GO_Central"/>
</dbReference>
<dbReference type="GO" id="GO:0005524">
    <property type="term" value="F:ATP binding"/>
    <property type="evidence" value="ECO:0007669"/>
    <property type="project" value="UniProtKB-KW"/>
</dbReference>
<dbReference type="GO" id="GO:0016887">
    <property type="term" value="F:ATP hydrolysis activity"/>
    <property type="evidence" value="ECO:0000250"/>
    <property type="project" value="FlyBase"/>
</dbReference>
<dbReference type="GO" id="GO:0140664">
    <property type="term" value="F:ATP-dependent DNA damage sensor activity"/>
    <property type="evidence" value="ECO:0007669"/>
    <property type="project" value="InterPro"/>
</dbReference>
<dbReference type="GO" id="GO:0003677">
    <property type="term" value="F:DNA binding"/>
    <property type="evidence" value="ECO:0000303"/>
    <property type="project" value="UniProtKB"/>
</dbReference>
<dbReference type="GO" id="GO:0030983">
    <property type="term" value="F:mismatched DNA binding"/>
    <property type="evidence" value="ECO:0000318"/>
    <property type="project" value="GO_Central"/>
</dbReference>
<dbReference type="GO" id="GO:0036297">
    <property type="term" value="P:interstrand cross-link repair"/>
    <property type="evidence" value="ECO:0000315"/>
    <property type="project" value="FlyBase"/>
</dbReference>
<dbReference type="GO" id="GO:0043570">
    <property type="term" value="P:maintenance of DNA repeat elements"/>
    <property type="evidence" value="ECO:0000315"/>
    <property type="project" value="FlyBase"/>
</dbReference>
<dbReference type="GO" id="GO:0006298">
    <property type="term" value="P:mismatch repair"/>
    <property type="evidence" value="ECO:0000315"/>
    <property type="project" value="UniProtKB"/>
</dbReference>
<dbReference type="GO" id="GO:0006312">
    <property type="term" value="P:mitotic recombination"/>
    <property type="evidence" value="ECO:0000318"/>
    <property type="project" value="GO_Central"/>
</dbReference>
<dbReference type="GO" id="GO:0006301">
    <property type="term" value="P:postreplication repair"/>
    <property type="evidence" value="ECO:0000250"/>
    <property type="project" value="UniProtKB"/>
</dbReference>
<dbReference type="FunFam" id="3.40.1170.10:FF:000003">
    <property type="entry name" value="DNA mismatch repair protein"/>
    <property type="match status" value="1"/>
</dbReference>
<dbReference type="FunFam" id="3.40.50.300:FF:001115">
    <property type="entry name" value="DNA mismatch repair protein MSH2"/>
    <property type="match status" value="1"/>
</dbReference>
<dbReference type="FunFam" id="1.10.1420.10:FF:000034">
    <property type="entry name" value="DNA mismatch repair protein msh2"/>
    <property type="match status" value="1"/>
</dbReference>
<dbReference type="Gene3D" id="1.10.1420.10">
    <property type="match status" value="2"/>
</dbReference>
<dbReference type="Gene3D" id="3.40.1170.10">
    <property type="entry name" value="DNA repair protein MutS, domain I"/>
    <property type="match status" value="1"/>
</dbReference>
<dbReference type="Gene3D" id="3.30.420.110">
    <property type="entry name" value="MutS, connector domain"/>
    <property type="match status" value="1"/>
</dbReference>
<dbReference type="Gene3D" id="3.40.50.300">
    <property type="entry name" value="P-loop containing nucleotide triphosphate hydrolases"/>
    <property type="match status" value="1"/>
</dbReference>
<dbReference type="InterPro" id="IPR011184">
    <property type="entry name" value="DNA_mismatch_repair_Msh2"/>
</dbReference>
<dbReference type="InterPro" id="IPR007695">
    <property type="entry name" value="DNA_mismatch_repair_MutS-lik_N"/>
</dbReference>
<dbReference type="InterPro" id="IPR000432">
    <property type="entry name" value="DNA_mismatch_repair_MutS_C"/>
</dbReference>
<dbReference type="InterPro" id="IPR007861">
    <property type="entry name" value="DNA_mismatch_repair_MutS_clamp"/>
</dbReference>
<dbReference type="InterPro" id="IPR007696">
    <property type="entry name" value="DNA_mismatch_repair_MutS_core"/>
</dbReference>
<dbReference type="InterPro" id="IPR016151">
    <property type="entry name" value="DNA_mismatch_repair_MutS_N"/>
</dbReference>
<dbReference type="InterPro" id="IPR036187">
    <property type="entry name" value="DNA_mismatch_repair_MutS_sf"/>
</dbReference>
<dbReference type="InterPro" id="IPR007860">
    <property type="entry name" value="DNA_mmatch_repair_MutS_con_dom"/>
</dbReference>
<dbReference type="InterPro" id="IPR045076">
    <property type="entry name" value="MutS"/>
</dbReference>
<dbReference type="InterPro" id="IPR036678">
    <property type="entry name" value="MutS_con_dom_sf"/>
</dbReference>
<dbReference type="InterPro" id="IPR027417">
    <property type="entry name" value="P-loop_NTPase"/>
</dbReference>
<dbReference type="PANTHER" id="PTHR11361:SF35">
    <property type="entry name" value="DNA MISMATCH REPAIR PROTEIN MSH2"/>
    <property type="match status" value="1"/>
</dbReference>
<dbReference type="PANTHER" id="PTHR11361">
    <property type="entry name" value="DNA MISMATCH REPAIR PROTEIN MUTS FAMILY MEMBER"/>
    <property type="match status" value="1"/>
</dbReference>
<dbReference type="Pfam" id="PF01624">
    <property type="entry name" value="MutS_I"/>
    <property type="match status" value="1"/>
</dbReference>
<dbReference type="Pfam" id="PF05188">
    <property type="entry name" value="MutS_II"/>
    <property type="match status" value="1"/>
</dbReference>
<dbReference type="Pfam" id="PF05192">
    <property type="entry name" value="MutS_III"/>
    <property type="match status" value="1"/>
</dbReference>
<dbReference type="Pfam" id="PF05190">
    <property type="entry name" value="MutS_IV"/>
    <property type="match status" value="1"/>
</dbReference>
<dbReference type="Pfam" id="PF00488">
    <property type="entry name" value="MutS_V"/>
    <property type="match status" value="1"/>
</dbReference>
<dbReference type="PIRSF" id="PIRSF005813">
    <property type="entry name" value="MSH2"/>
    <property type="match status" value="1"/>
</dbReference>
<dbReference type="SMART" id="SM00534">
    <property type="entry name" value="MUTSac"/>
    <property type="match status" value="1"/>
</dbReference>
<dbReference type="SMART" id="SM00533">
    <property type="entry name" value="MUTSd"/>
    <property type="match status" value="1"/>
</dbReference>
<dbReference type="SUPFAM" id="SSF48334">
    <property type="entry name" value="DNA repair protein MutS, domain III"/>
    <property type="match status" value="1"/>
</dbReference>
<dbReference type="SUPFAM" id="SSF52540">
    <property type="entry name" value="P-loop containing nucleoside triphosphate hydrolases"/>
    <property type="match status" value="1"/>
</dbReference>
<dbReference type="PROSITE" id="PS00486">
    <property type="entry name" value="DNA_MISMATCH_REPAIR_2"/>
    <property type="match status" value="1"/>
</dbReference>
<organism>
    <name type="scientific">Drosophila melanogaster</name>
    <name type="common">Fruit fly</name>
    <dbReference type="NCBI Taxonomy" id="7227"/>
    <lineage>
        <taxon>Eukaryota</taxon>
        <taxon>Metazoa</taxon>
        <taxon>Ecdysozoa</taxon>
        <taxon>Arthropoda</taxon>
        <taxon>Hexapoda</taxon>
        <taxon>Insecta</taxon>
        <taxon>Pterygota</taxon>
        <taxon>Neoptera</taxon>
        <taxon>Endopterygota</taxon>
        <taxon>Diptera</taxon>
        <taxon>Brachycera</taxon>
        <taxon>Muscomorpha</taxon>
        <taxon>Ephydroidea</taxon>
        <taxon>Drosophilidae</taxon>
        <taxon>Drosophila</taxon>
        <taxon>Sophophora</taxon>
    </lineage>
</organism>
<reference key="1">
    <citation type="journal article" date="1999" name="Proc. Natl. Acad. Sci. U.S.A.">
        <title>Microsatellite instability in Drosophila spellchecker1 (MutS homolog) mutants.</title>
        <authorList>
            <person name="Flores C."/>
            <person name="Engels W."/>
        </authorList>
    </citation>
    <scope>NUCLEOTIDE SEQUENCE [GENOMIC DNA]</scope>
    <scope>FUNCTION</scope>
    <source>
        <strain>Canton-S</strain>
        <tissue>Head</tissue>
    </source>
</reference>
<reference key="2">
    <citation type="journal article" date="1999" name="Genetics">
        <title>An exploration of the sequence of a 2.9-Mb region of the genome of Drosophila melanogaster: the Adh region.</title>
        <authorList>
            <person name="Ashburner M."/>
            <person name="Misra S."/>
            <person name="Roote J."/>
            <person name="Lewis S.E."/>
            <person name="Blazej R.G."/>
            <person name="Davis T."/>
            <person name="Doyle C."/>
            <person name="Galle R.F."/>
            <person name="George R.A."/>
            <person name="Harris N.L."/>
            <person name="Hartzell G."/>
            <person name="Harvey D.A."/>
            <person name="Hong L."/>
            <person name="Houston K.A."/>
            <person name="Hoskins R.A."/>
            <person name="Johnson G."/>
            <person name="Martin C."/>
            <person name="Moshrefi A.R."/>
            <person name="Palazzolo M."/>
            <person name="Reese M.G."/>
            <person name="Spradling A.C."/>
            <person name="Tsang G."/>
            <person name="Wan K.H."/>
            <person name="Whitelaw K."/>
            <person name="Celniker S.E."/>
            <person name="Rubin G.M."/>
        </authorList>
    </citation>
    <scope>NUCLEOTIDE SEQUENCE [LARGE SCALE GENOMIC DNA]</scope>
    <source>
        <strain>Berkeley</strain>
    </source>
</reference>
<reference key="3">
    <citation type="journal article" date="2000" name="Science">
        <title>The genome sequence of Drosophila melanogaster.</title>
        <authorList>
            <person name="Adams M.D."/>
            <person name="Celniker S.E."/>
            <person name="Holt R.A."/>
            <person name="Evans C.A."/>
            <person name="Gocayne J.D."/>
            <person name="Amanatides P.G."/>
            <person name="Scherer S.E."/>
            <person name="Li P.W."/>
            <person name="Hoskins R.A."/>
            <person name="Galle R.F."/>
            <person name="George R.A."/>
            <person name="Lewis S.E."/>
            <person name="Richards S."/>
            <person name="Ashburner M."/>
            <person name="Henderson S.N."/>
            <person name="Sutton G.G."/>
            <person name="Wortman J.R."/>
            <person name="Yandell M.D."/>
            <person name="Zhang Q."/>
            <person name="Chen L.X."/>
            <person name="Brandon R.C."/>
            <person name="Rogers Y.-H.C."/>
            <person name="Blazej R.G."/>
            <person name="Champe M."/>
            <person name="Pfeiffer B.D."/>
            <person name="Wan K.H."/>
            <person name="Doyle C."/>
            <person name="Baxter E.G."/>
            <person name="Helt G."/>
            <person name="Nelson C.R."/>
            <person name="Miklos G.L.G."/>
            <person name="Abril J.F."/>
            <person name="Agbayani A."/>
            <person name="An H.-J."/>
            <person name="Andrews-Pfannkoch C."/>
            <person name="Baldwin D."/>
            <person name="Ballew R.M."/>
            <person name="Basu A."/>
            <person name="Baxendale J."/>
            <person name="Bayraktaroglu L."/>
            <person name="Beasley E.M."/>
            <person name="Beeson K.Y."/>
            <person name="Benos P.V."/>
            <person name="Berman B.P."/>
            <person name="Bhandari D."/>
            <person name="Bolshakov S."/>
            <person name="Borkova D."/>
            <person name="Botchan M.R."/>
            <person name="Bouck J."/>
            <person name="Brokstein P."/>
            <person name="Brottier P."/>
            <person name="Burtis K.C."/>
            <person name="Busam D.A."/>
            <person name="Butler H."/>
            <person name="Cadieu E."/>
            <person name="Center A."/>
            <person name="Chandra I."/>
            <person name="Cherry J.M."/>
            <person name="Cawley S."/>
            <person name="Dahlke C."/>
            <person name="Davenport L.B."/>
            <person name="Davies P."/>
            <person name="de Pablos B."/>
            <person name="Delcher A."/>
            <person name="Deng Z."/>
            <person name="Mays A.D."/>
            <person name="Dew I."/>
            <person name="Dietz S.M."/>
            <person name="Dodson K."/>
            <person name="Doup L.E."/>
            <person name="Downes M."/>
            <person name="Dugan-Rocha S."/>
            <person name="Dunkov B.C."/>
            <person name="Dunn P."/>
            <person name="Durbin K.J."/>
            <person name="Evangelista C.C."/>
            <person name="Ferraz C."/>
            <person name="Ferriera S."/>
            <person name="Fleischmann W."/>
            <person name="Fosler C."/>
            <person name="Gabrielian A.E."/>
            <person name="Garg N.S."/>
            <person name="Gelbart W.M."/>
            <person name="Glasser K."/>
            <person name="Glodek A."/>
            <person name="Gong F."/>
            <person name="Gorrell J.H."/>
            <person name="Gu Z."/>
            <person name="Guan P."/>
            <person name="Harris M."/>
            <person name="Harris N.L."/>
            <person name="Harvey D.A."/>
            <person name="Heiman T.J."/>
            <person name="Hernandez J.R."/>
            <person name="Houck J."/>
            <person name="Hostin D."/>
            <person name="Houston K.A."/>
            <person name="Howland T.J."/>
            <person name="Wei M.-H."/>
            <person name="Ibegwam C."/>
            <person name="Jalali M."/>
            <person name="Kalush F."/>
            <person name="Karpen G.H."/>
            <person name="Ke Z."/>
            <person name="Kennison J.A."/>
            <person name="Ketchum K.A."/>
            <person name="Kimmel B.E."/>
            <person name="Kodira C.D."/>
            <person name="Kraft C.L."/>
            <person name="Kravitz S."/>
            <person name="Kulp D."/>
            <person name="Lai Z."/>
            <person name="Lasko P."/>
            <person name="Lei Y."/>
            <person name="Levitsky A.A."/>
            <person name="Li J.H."/>
            <person name="Li Z."/>
            <person name="Liang Y."/>
            <person name="Lin X."/>
            <person name="Liu X."/>
            <person name="Mattei B."/>
            <person name="McIntosh T.C."/>
            <person name="McLeod M.P."/>
            <person name="McPherson D."/>
            <person name="Merkulov G."/>
            <person name="Milshina N.V."/>
            <person name="Mobarry C."/>
            <person name="Morris J."/>
            <person name="Moshrefi A."/>
            <person name="Mount S.M."/>
            <person name="Moy M."/>
            <person name="Murphy B."/>
            <person name="Murphy L."/>
            <person name="Muzny D.M."/>
            <person name="Nelson D.L."/>
            <person name="Nelson D.R."/>
            <person name="Nelson K.A."/>
            <person name="Nixon K."/>
            <person name="Nusskern D.R."/>
            <person name="Pacleb J.M."/>
            <person name="Palazzolo M."/>
            <person name="Pittman G.S."/>
            <person name="Pan S."/>
            <person name="Pollard J."/>
            <person name="Puri V."/>
            <person name="Reese M.G."/>
            <person name="Reinert K."/>
            <person name="Remington K."/>
            <person name="Saunders R.D.C."/>
            <person name="Scheeler F."/>
            <person name="Shen H."/>
            <person name="Shue B.C."/>
            <person name="Siden-Kiamos I."/>
            <person name="Simpson M."/>
            <person name="Skupski M.P."/>
            <person name="Smith T.J."/>
            <person name="Spier E."/>
            <person name="Spradling A.C."/>
            <person name="Stapleton M."/>
            <person name="Strong R."/>
            <person name="Sun E."/>
            <person name="Svirskas R."/>
            <person name="Tector C."/>
            <person name="Turner R."/>
            <person name="Venter E."/>
            <person name="Wang A.H."/>
            <person name="Wang X."/>
            <person name="Wang Z.-Y."/>
            <person name="Wassarman D.A."/>
            <person name="Weinstock G.M."/>
            <person name="Weissenbach J."/>
            <person name="Williams S.M."/>
            <person name="Woodage T."/>
            <person name="Worley K.C."/>
            <person name="Wu D."/>
            <person name="Yang S."/>
            <person name="Yao Q.A."/>
            <person name="Ye J."/>
            <person name="Yeh R.-F."/>
            <person name="Zaveri J.S."/>
            <person name="Zhan M."/>
            <person name="Zhang G."/>
            <person name="Zhao Q."/>
            <person name="Zheng L."/>
            <person name="Zheng X.H."/>
            <person name="Zhong F.N."/>
            <person name="Zhong W."/>
            <person name="Zhou X."/>
            <person name="Zhu S.C."/>
            <person name="Zhu X."/>
            <person name="Smith H.O."/>
            <person name="Gibbs R.A."/>
            <person name="Myers E.W."/>
            <person name="Rubin G.M."/>
            <person name="Venter J.C."/>
        </authorList>
    </citation>
    <scope>NUCLEOTIDE SEQUENCE [LARGE SCALE GENOMIC DNA]</scope>
    <source>
        <strain>Berkeley</strain>
    </source>
</reference>
<reference key="4">
    <citation type="journal article" date="2002" name="Genome Biol.">
        <title>Annotation of the Drosophila melanogaster euchromatic genome: a systematic review.</title>
        <authorList>
            <person name="Misra S."/>
            <person name="Crosby M.A."/>
            <person name="Mungall C.J."/>
            <person name="Matthews B.B."/>
            <person name="Campbell K.S."/>
            <person name="Hradecky P."/>
            <person name="Huang Y."/>
            <person name="Kaminker J.S."/>
            <person name="Millburn G.H."/>
            <person name="Prochnik S.E."/>
            <person name="Smith C.D."/>
            <person name="Tupy J.L."/>
            <person name="Whitfield E.J."/>
            <person name="Bayraktaroglu L."/>
            <person name="Berman B.P."/>
            <person name="Bettencourt B.R."/>
            <person name="Celniker S.E."/>
            <person name="de Grey A.D.N.J."/>
            <person name="Drysdale R.A."/>
            <person name="Harris N.L."/>
            <person name="Richter J."/>
            <person name="Russo S."/>
            <person name="Schroeder A.J."/>
            <person name="Shu S.Q."/>
            <person name="Stapleton M."/>
            <person name="Yamada C."/>
            <person name="Ashburner M."/>
            <person name="Gelbart W.M."/>
            <person name="Rubin G.M."/>
            <person name="Lewis S.E."/>
        </authorList>
    </citation>
    <scope>GENOME REANNOTATION</scope>
    <source>
        <strain>Berkeley</strain>
    </source>
</reference>